<gene>
    <name evidence="4" type="primary">dcsE</name>
    <name type="synonym">metX</name>
</gene>
<name>DCSE_STRLA</name>
<keyword id="KW-0002">3D-structure</keyword>
<keyword id="KW-0012">Acyltransferase</keyword>
<keyword id="KW-0028">Amino-acid biosynthesis</keyword>
<keyword id="KW-0963">Cytoplasm</keyword>
<keyword id="KW-0808">Transferase</keyword>
<comment type="function">
    <text evidence="2 3">Involved in the biosynthesis of the antibiotic D-cycloserine (DCS), a cyclic structural analog of D-alanine, used as an antitubercular agent. Catalyzes the transfer of the acetyl group from acetyl-CoA to the hydroxyl group of L-serine to yield the activated serine, O-acetyl-L-serine. It prefers L-serine over L-homoserine.</text>
</comment>
<comment type="catalytic activity">
    <reaction evidence="2">
        <text>L-serine + acetyl-CoA = O-acetyl-L-serine + CoA</text>
        <dbReference type="Rhea" id="RHEA:24560"/>
        <dbReference type="ChEBI" id="CHEBI:33384"/>
        <dbReference type="ChEBI" id="CHEBI:57287"/>
        <dbReference type="ChEBI" id="CHEBI:57288"/>
        <dbReference type="ChEBI" id="CHEBI:58340"/>
        <dbReference type="EC" id="2.3.1.30"/>
    </reaction>
</comment>
<comment type="catalytic activity">
    <reaction evidence="1 2">
        <text>L-homoserine + acetyl-CoA = O-acetyl-L-homoserine + CoA</text>
        <dbReference type="Rhea" id="RHEA:13701"/>
        <dbReference type="ChEBI" id="CHEBI:57287"/>
        <dbReference type="ChEBI" id="CHEBI:57288"/>
        <dbReference type="ChEBI" id="CHEBI:57476"/>
        <dbReference type="ChEBI" id="CHEBI:57716"/>
        <dbReference type="EC" id="2.3.1.31"/>
    </reaction>
</comment>
<comment type="biophysicochemical properties">
    <kinetics>
        <KM evidence="3">4.9 mM for L-serine (at 30 degrees Celsius and pH 8)</KM>
        <KM evidence="3">98 mM for L-homoserine (at 30 degrees Celsius and pH 8)</KM>
        <text>kcat is 95 min(-1) and 88 min(-1) for L-serine and L-homoserine, respectively (at 30 degrees Celsius and pH 8).</text>
    </kinetics>
</comment>
<comment type="pathway">
    <text evidence="2">Antibiotic biosynthesis.</text>
</comment>
<comment type="subunit">
    <text evidence="1 3">Homodimer.</text>
</comment>
<comment type="subcellular location">
    <subcellularLocation>
        <location evidence="1">Cytoplasm</location>
    </subcellularLocation>
</comment>
<comment type="similarity">
    <text evidence="1">Belongs to the AB hydrolase superfamily. MetX family.</text>
</comment>
<proteinExistence type="evidence at protein level"/>
<evidence type="ECO:0000255" key="1">
    <source>
        <dbReference type="HAMAP-Rule" id="MF_00296"/>
    </source>
</evidence>
<evidence type="ECO:0000269" key="2">
    <source>
    </source>
</evidence>
<evidence type="ECO:0000269" key="3">
    <source>
    </source>
</evidence>
<evidence type="ECO:0000303" key="4">
    <source>
    </source>
</evidence>
<evidence type="ECO:0007829" key="5">
    <source>
        <dbReference type="PDB" id="3VVL"/>
    </source>
</evidence>
<evidence type="ECO:0007829" key="6">
    <source>
        <dbReference type="PDB" id="3VVM"/>
    </source>
</evidence>
<reference key="1">
    <citation type="journal article" date="2010" name="Antimicrob. Agents Chemother.">
        <title>Molecular cloning and heterologous expression of a biosynthetic gene cluster for the antitubercular agent D-cycloserine produced by Streptomyces lavendulae.</title>
        <authorList>
            <person name="Kumagai T."/>
            <person name="Koyama Y."/>
            <person name="Oda K."/>
            <person name="Noda M."/>
            <person name="Matoba Y."/>
            <person name="Sugiyama M."/>
        </authorList>
    </citation>
    <scope>NUCLEOTIDE SEQUENCE [GENOMIC DNA]</scope>
    <scope>FUNCTION</scope>
    <scope>CATALYTIC ACTIVITY</scope>
    <scope>PATHWAY</scope>
    <source>
        <strain>ATCC 11924 / 8197-20</strain>
    </source>
</reference>
<reference key="2">
    <citation type="journal article" date="2013" name="J. Bacteriol.">
        <title>Crystallographic study to determine the substrate specificity of an L-serine-acetylating enzyme found in the D-cycloserine biosynthetic pathway.</title>
        <authorList>
            <person name="Oda K."/>
            <person name="Matoba Y."/>
            <person name="Kumagai T."/>
            <person name="Noda M."/>
            <person name="Sugiyama M."/>
        </authorList>
    </citation>
    <scope>X-RAY CRYSTALLOGRAPHY (1.70 ANGSTROMS) OF WILD-TYPE AND MUTANTS</scope>
    <scope>FUNCTION</scope>
    <scope>MUTAGENESIS OF GLY-52 AND PRO-55</scope>
    <scope>ACTIVE SITE</scope>
    <scope>BIOPHYSICOCHEMICAL PROPERTIES</scope>
    <scope>SUBSTRATE SPECIFICITY</scope>
    <scope>SUBUNIT</scope>
</reference>
<feature type="chain" id="PRO_0000424058" description="L-serine/homoserine O-acetyltransferase">
    <location>
        <begin position="1"/>
        <end position="374"/>
    </location>
</feature>
<feature type="domain" description="AB hydrolase-1" evidence="1">
    <location>
        <begin position="46"/>
        <end position="357"/>
    </location>
</feature>
<feature type="active site" description="Nucleophile" evidence="1">
    <location>
        <position position="149"/>
    </location>
</feature>
<feature type="active site" evidence="1">
    <location>
        <position position="319"/>
    </location>
</feature>
<feature type="active site" evidence="1">
    <location>
        <position position="352"/>
    </location>
</feature>
<feature type="site" description="Important for substrate specificity">
    <location>
        <position position="52"/>
    </location>
</feature>
<feature type="site" description="Important for substrate specificity">
    <location>
        <position position="55"/>
    </location>
</feature>
<feature type="mutagenesis site" description="Has much lower activity for the acetylation of L-serine but keeps the activity against L-homoserine. Utilizes L-homoserine as a substrate for acetylation but barely utilizes L-serine; when associated with G-55." evidence="3">
    <original>G</original>
    <variation>A</variation>
    <location>
        <position position="52"/>
    </location>
</feature>
<feature type="mutagenesis site" description="Can acetylate both L-serine and L-homoserine. Utilizes L-homoserine as a substrate for acetylation but barely utilizes L-serine; when associated with A-52." evidence="3">
    <original>P</original>
    <variation>G</variation>
    <location>
        <position position="55"/>
    </location>
</feature>
<feature type="strand" evidence="6">
    <location>
        <begin position="10"/>
        <end position="13"/>
    </location>
</feature>
<feature type="strand" evidence="6">
    <location>
        <begin position="25"/>
        <end position="28"/>
    </location>
</feature>
<feature type="strand" evidence="6">
    <location>
        <begin position="30"/>
        <end position="37"/>
    </location>
</feature>
<feature type="strand" evidence="6">
    <location>
        <begin position="46"/>
        <end position="50"/>
    </location>
</feature>
<feature type="turn" evidence="6">
    <location>
        <begin position="70"/>
        <end position="74"/>
    </location>
</feature>
<feature type="strand" evidence="6">
    <location>
        <begin position="79"/>
        <end position="82"/>
    </location>
</feature>
<feature type="turn" evidence="6">
    <location>
        <begin position="83"/>
        <end position="85"/>
    </location>
</feature>
<feature type="strand" evidence="6">
    <location>
        <begin position="87"/>
        <end position="91"/>
    </location>
</feature>
<feature type="strand" evidence="6">
    <location>
        <begin position="97"/>
        <end position="102"/>
    </location>
</feature>
<feature type="turn" evidence="6">
    <location>
        <begin position="108"/>
        <end position="110"/>
    </location>
</feature>
<feature type="strand" evidence="6">
    <location>
        <begin position="111"/>
        <end position="113"/>
    </location>
</feature>
<feature type="helix" evidence="6">
    <location>
        <begin position="115"/>
        <end position="117"/>
    </location>
</feature>
<feature type="helix" evidence="6">
    <location>
        <begin position="123"/>
        <end position="136"/>
    </location>
</feature>
<feature type="strand" evidence="6">
    <location>
        <begin position="140"/>
        <end position="148"/>
    </location>
</feature>
<feature type="helix" evidence="6">
    <location>
        <begin position="150"/>
        <end position="161"/>
    </location>
</feature>
<feature type="strand" evidence="6">
    <location>
        <begin position="165"/>
        <end position="173"/>
    </location>
</feature>
<feature type="helix" evidence="6">
    <location>
        <begin position="180"/>
        <end position="194"/>
    </location>
</feature>
<feature type="helix" evidence="6">
    <location>
        <begin position="200"/>
        <end position="202"/>
    </location>
</feature>
<feature type="strand" evidence="5">
    <location>
        <begin position="206"/>
        <end position="210"/>
    </location>
</feature>
<feature type="helix" evidence="6">
    <location>
        <begin position="211"/>
        <end position="225"/>
    </location>
</feature>
<feature type="helix" evidence="6">
    <location>
        <begin position="228"/>
        <end position="235"/>
    </location>
</feature>
<feature type="helix" evidence="6">
    <location>
        <begin position="256"/>
        <end position="269"/>
    </location>
</feature>
<feature type="helix" evidence="6">
    <location>
        <begin position="274"/>
        <end position="286"/>
    </location>
</feature>
<feature type="helix" evidence="6">
    <location>
        <begin position="289"/>
        <end position="291"/>
    </location>
</feature>
<feature type="helix" evidence="6">
    <location>
        <begin position="293"/>
        <end position="295"/>
    </location>
</feature>
<feature type="helix" evidence="6">
    <location>
        <begin position="298"/>
        <end position="305"/>
    </location>
</feature>
<feature type="strand" evidence="6">
    <location>
        <begin position="309"/>
        <end position="316"/>
    </location>
</feature>
<feature type="strand" evidence="6">
    <location>
        <begin position="320"/>
        <end position="322"/>
    </location>
</feature>
<feature type="helix" evidence="6">
    <location>
        <begin position="324"/>
        <end position="336"/>
    </location>
</feature>
<feature type="strand" evidence="6">
    <location>
        <begin position="340"/>
        <end position="346"/>
    </location>
</feature>
<feature type="helix" evidence="6">
    <location>
        <begin position="351"/>
        <end position="353"/>
    </location>
</feature>
<feature type="helix" evidence="6">
    <location>
        <begin position="354"/>
        <end position="357"/>
    </location>
</feature>
<feature type="helix" evidence="6">
    <location>
        <begin position="359"/>
        <end position="373"/>
    </location>
</feature>
<sequence length="374" mass="40268">MREFIPPASRFIELPDGFAMRRGGALYGARIAYETFGSLNAARDNAVLVLTGLSPDAHAASRPDDPTPGWWEAMVGPGKPVDTDLWHVICVNSLGSCKGSTGPASTDPRTGEPYRLSFPELSIEDIADAAAHTVRALGISRLACVVGASMGGMSALALLARHPELARTHISLSGAVHALPFSIAVRSLQREAIRSDPGWLQGHYDEGEGPRRGMLTARKLGMMTYRSAQEWDCRFGRTRIGERRRADQGRFGPEFEVESYLDFHAQRFADRFDPNSYLYLSHAMDQFDLGDGGGGGGGAPGALSRMRVERALVMGARTDILFPLSQQQEIADGLSAGGADVSFLPVDTPAGHDAFLVDIERFGPPVAKFLAIVA</sequence>
<protein>
    <recommendedName>
        <fullName>L-serine/homoserine O-acetyltransferase</fullName>
        <ecNumber>2.3.1.30</ecNumber>
        <ecNumber evidence="1">2.3.1.31</ecNumber>
    </recommendedName>
    <alternativeName>
        <fullName evidence="1">Homoserine O-trans-acetylase</fullName>
    </alternativeName>
</protein>
<accession>D2Z028</accession>
<dbReference type="EC" id="2.3.1.30"/>
<dbReference type="EC" id="2.3.1.31" evidence="1"/>
<dbReference type="EMBL" id="AB516431">
    <property type="protein sequence ID" value="BAI70379.1"/>
    <property type="molecule type" value="Genomic_DNA"/>
</dbReference>
<dbReference type="PDB" id="3VVL">
    <property type="method" value="X-ray"/>
    <property type="resolution" value="1.81 A"/>
    <property type="chains" value="A/B=1-374"/>
</dbReference>
<dbReference type="PDB" id="3VVM">
    <property type="method" value="X-ray"/>
    <property type="resolution" value="1.70 A"/>
    <property type="chains" value="A/B=1-374"/>
</dbReference>
<dbReference type="PDBsum" id="3VVL"/>
<dbReference type="PDBsum" id="3VVM"/>
<dbReference type="SMR" id="D2Z028"/>
<dbReference type="ESTHER" id="strla-d2z028">
    <property type="family name" value="Homoserine_transacetylase"/>
</dbReference>
<dbReference type="KEGG" id="ag:BAI70379"/>
<dbReference type="BioCyc" id="MetaCyc:MONOMER-18015"/>
<dbReference type="BRENDA" id="2.3.1.30">
    <property type="organism ID" value="133"/>
</dbReference>
<dbReference type="BRENDA" id="2.3.1.31">
    <property type="organism ID" value="133"/>
</dbReference>
<dbReference type="EvolutionaryTrace" id="D2Z028"/>
<dbReference type="GO" id="GO:0005737">
    <property type="term" value="C:cytoplasm"/>
    <property type="evidence" value="ECO:0007669"/>
    <property type="project" value="UniProtKB-SubCell"/>
</dbReference>
<dbReference type="GO" id="GO:0004414">
    <property type="term" value="F:homoserine O-acetyltransferase activity"/>
    <property type="evidence" value="ECO:0000314"/>
    <property type="project" value="UniProtKB"/>
</dbReference>
<dbReference type="GO" id="GO:0016750">
    <property type="term" value="F:O-succinyltransferase activity"/>
    <property type="evidence" value="ECO:0007669"/>
    <property type="project" value="UniProtKB-UniRule"/>
</dbReference>
<dbReference type="GO" id="GO:0009001">
    <property type="term" value="F:serine O-acetyltransferase activity"/>
    <property type="evidence" value="ECO:0000314"/>
    <property type="project" value="UniProtKB"/>
</dbReference>
<dbReference type="GO" id="GO:0006535">
    <property type="term" value="P:cysteine biosynthetic process from serine"/>
    <property type="evidence" value="ECO:0007669"/>
    <property type="project" value="UniProtKB-UniRule"/>
</dbReference>
<dbReference type="GO" id="GO:0009092">
    <property type="term" value="P:homoserine metabolic process"/>
    <property type="evidence" value="ECO:0007669"/>
    <property type="project" value="TreeGrafter"/>
</dbReference>
<dbReference type="GO" id="GO:0009086">
    <property type="term" value="P:methionine biosynthetic process"/>
    <property type="evidence" value="ECO:0007669"/>
    <property type="project" value="TreeGrafter"/>
</dbReference>
<dbReference type="Gene3D" id="1.10.1740.110">
    <property type="match status" value="1"/>
</dbReference>
<dbReference type="Gene3D" id="3.40.50.1820">
    <property type="entry name" value="alpha/beta hydrolase"/>
    <property type="match status" value="1"/>
</dbReference>
<dbReference type="HAMAP" id="MF_00296">
    <property type="entry name" value="MetX_acyltransf"/>
    <property type="match status" value="1"/>
</dbReference>
<dbReference type="InterPro" id="IPR000073">
    <property type="entry name" value="AB_hydrolase_1"/>
</dbReference>
<dbReference type="InterPro" id="IPR029058">
    <property type="entry name" value="AB_hydrolase_fold"/>
</dbReference>
<dbReference type="InterPro" id="IPR008220">
    <property type="entry name" value="HAT_MetX-like"/>
</dbReference>
<dbReference type="NCBIfam" id="TIGR01392">
    <property type="entry name" value="homoserO_Ac_trn"/>
    <property type="match status" value="1"/>
</dbReference>
<dbReference type="NCBIfam" id="NF001209">
    <property type="entry name" value="PRK00175.1"/>
    <property type="match status" value="1"/>
</dbReference>
<dbReference type="PANTHER" id="PTHR32268">
    <property type="entry name" value="HOMOSERINE O-ACETYLTRANSFERASE"/>
    <property type="match status" value="1"/>
</dbReference>
<dbReference type="PANTHER" id="PTHR32268:SF11">
    <property type="entry name" value="HOMOSERINE O-ACETYLTRANSFERASE"/>
    <property type="match status" value="1"/>
</dbReference>
<dbReference type="Pfam" id="PF00561">
    <property type="entry name" value="Abhydrolase_1"/>
    <property type="match status" value="1"/>
</dbReference>
<dbReference type="PIRSF" id="PIRSF000443">
    <property type="entry name" value="Homoser_Ac_trans"/>
    <property type="match status" value="1"/>
</dbReference>
<dbReference type="SUPFAM" id="SSF53474">
    <property type="entry name" value="alpha/beta-Hydrolases"/>
    <property type="match status" value="1"/>
</dbReference>
<organism>
    <name type="scientific">Streptomyces lavendulae</name>
    <dbReference type="NCBI Taxonomy" id="1914"/>
    <lineage>
        <taxon>Bacteria</taxon>
        <taxon>Bacillati</taxon>
        <taxon>Actinomycetota</taxon>
        <taxon>Actinomycetes</taxon>
        <taxon>Kitasatosporales</taxon>
        <taxon>Streptomycetaceae</taxon>
        <taxon>Streptomyces</taxon>
    </lineage>
</organism>